<organism>
    <name type="scientific">Francisella tularensis subsp. holarctica (strain LVS)</name>
    <dbReference type="NCBI Taxonomy" id="376619"/>
    <lineage>
        <taxon>Bacteria</taxon>
        <taxon>Pseudomonadati</taxon>
        <taxon>Pseudomonadota</taxon>
        <taxon>Gammaproteobacteria</taxon>
        <taxon>Thiotrichales</taxon>
        <taxon>Francisellaceae</taxon>
        <taxon>Francisella</taxon>
    </lineage>
</organism>
<evidence type="ECO:0000255" key="1">
    <source>
        <dbReference type="HAMAP-Rule" id="MF_00446"/>
    </source>
</evidence>
<evidence type="ECO:0000305" key="2"/>
<reference key="1">
    <citation type="submission" date="2006-03" db="EMBL/GenBank/DDBJ databases">
        <title>Complete genome sequence of Francisella tularensis LVS (Live Vaccine Strain).</title>
        <authorList>
            <person name="Chain P."/>
            <person name="Larimer F."/>
            <person name="Land M."/>
            <person name="Stilwagen S."/>
            <person name="Larsson P."/>
            <person name="Bearden S."/>
            <person name="Chu M."/>
            <person name="Oyston P."/>
            <person name="Forsman M."/>
            <person name="Andersson S."/>
            <person name="Lindler L."/>
            <person name="Titball R."/>
            <person name="Garcia E."/>
        </authorList>
    </citation>
    <scope>NUCLEOTIDE SEQUENCE [LARGE SCALE GENOMIC DNA]</scope>
    <source>
        <strain>LVS</strain>
    </source>
</reference>
<protein>
    <recommendedName>
        <fullName evidence="1">Aspartate 1-decarboxylase</fullName>
        <ecNumber evidence="1">4.1.1.11</ecNumber>
    </recommendedName>
    <alternativeName>
        <fullName evidence="1">Aspartate alpha-decarboxylase</fullName>
    </alternativeName>
    <component>
        <recommendedName>
            <fullName evidence="1">Aspartate 1-decarboxylase beta chain</fullName>
        </recommendedName>
    </component>
    <component>
        <recommendedName>
            <fullName evidence="1">Aspartate 1-decarboxylase alpha chain</fullName>
        </recommendedName>
    </component>
</protein>
<feature type="chain" id="PRO_0000306975" description="Aspartate 1-decarboxylase beta chain" evidence="1">
    <location>
        <begin position="1"/>
        <end position="24"/>
    </location>
</feature>
<feature type="chain" id="PRO_0000306976" description="Aspartate 1-decarboxylase alpha chain" evidence="1">
    <location>
        <begin position="25"/>
        <end position="111"/>
    </location>
</feature>
<feature type="active site" description="Schiff-base intermediate with substrate; via pyruvic acid" evidence="1">
    <location>
        <position position="25"/>
    </location>
</feature>
<feature type="active site" description="Proton donor" evidence="1">
    <location>
        <position position="58"/>
    </location>
</feature>
<feature type="binding site" evidence="1">
    <location>
        <position position="57"/>
    </location>
    <ligand>
        <name>substrate</name>
    </ligand>
</feature>
<feature type="binding site" evidence="1">
    <location>
        <begin position="73"/>
        <end position="75"/>
    </location>
    <ligand>
        <name>substrate</name>
    </ligand>
</feature>
<feature type="modified residue" description="Pyruvic acid (Ser)" evidence="1">
    <location>
        <position position="25"/>
    </location>
</feature>
<keyword id="KW-0068">Autocatalytic cleavage</keyword>
<keyword id="KW-0963">Cytoplasm</keyword>
<keyword id="KW-0210">Decarboxylase</keyword>
<keyword id="KW-0456">Lyase</keyword>
<keyword id="KW-0566">Pantothenate biosynthesis</keyword>
<keyword id="KW-0670">Pyruvate</keyword>
<keyword id="KW-1185">Reference proteome</keyword>
<keyword id="KW-0704">Schiff base</keyword>
<keyword id="KW-0865">Zymogen</keyword>
<gene>
    <name evidence="1" type="primary">panD</name>
    <name type="ordered locus">FTL_0672</name>
</gene>
<name>PAND_FRATH</name>
<accession>Q2A4C8</accession>
<comment type="function">
    <text evidence="1">Catalyzes the pyruvoyl-dependent decarboxylation of aspartate to produce beta-alanine.</text>
</comment>
<comment type="catalytic activity">
    <reaction evidence="1">
        <text>L-aspartate + H(+) = beta-alanine + CO2</text>
        <dbReference type="Rhea" id="RHEA:19497"/>
        <dbReference type="ChEBI" id="CHEBI:15378"/>
        <dbReference type="ChEBI" id="CHEBI:16526"/>
        <dbReference type="ChEBI" id="CHEBI:29991"/>
        <dbReference type="ChEBI" id="CHEBI:57966"/>
        <dbReference type="EC" id="4.1.1.11"/>
    </reaction>
</comment>
<comment type="cofactor">
    <cofactor evidence="1">
        <name>pyruvate</name>
        <dbReference type="ChEBI" id="CHEBI:15361"/>
    </cofactor>
    <text evidence="1">Binds 1 pyruvoyl group covalently per subunit.</text>
</comment>
<comment type="pathway">
    <text evidence="1">Cofactor biosynthesis; (R)-pantothenate biosynthesis; beta-alanine from L-aspartate: step 1/1.</text>
</comment>
<comment type="subunit">
    <text evidence="1">Heterooctamer of four alpha and four beta subunits.</text>
</comment>
<comment type="subcellular location">
    <subcellularLocation>
        <location evidence="1">Cytoplasm</location>
    </subcellularLocation>
</comment>
<comment type="PTM">
    <text evidence="1">Is synthesized initially as an inactive proenzyme, which is activated by self-cleavage at a specific serine bond to produce a beta-subunit with a hydroxyl group at its C-terminus and an alpha-subunit with a pyruvoyl group at its N-terminus.</text>
</comment>
<comment type="similarity">
    <text evidence="1">Belongs to the PanD family.</text>
</comment>
<comment type="sequence caution" evidence="2">
    <conflict type="erroneous termination">
        <sequence resource="EMBL-CDS" id="CAJ79111"/>
    </conflict>
    <text>Truncated C-terminus.</text>
</comment>
<sequence>MLISVLKSKISYATVTGKDLFYVGSITIDSEIMKQANIIENEKVQVVNLNNGERLETYVIKGEPNSKTIALNGPAARRCEIGDQLFIISYAQVDPTRENIKPKLVDLKTGD</sequence>
<dbReference type="EC" id="4.1.1.11" evidence="1"/>
<dbReference type="EMBL" id="AM233362">
    <property type="protein sequence ID" value="CAJ79111.1"/>
    <property type="status" value="ALT_SEQ"/>
    <property type="molecule type" value="Genomic_DNA"/>
</dbReference>
<dbReference type="SMR" id="Q2A4C8"/>
<dbReference type="KEGG" id="ftl:FTL_0672"/>
<dbReference type="UniPathway" id="UPA00028">
    <property type="reaction ID" value="UER00002"/>
</dbReference>
<dbReference type="Proteomes" id="UP000001944">
    <property type="component" value="Chromosome"/>
</dbReference>
<dbReference type="GO" id="GO:0005829">
    <property type="term" value="C:cytosol"/>
    <property type="evidence" value="ECO:0007669"/>
    <property type="project" value="TreeGrafter"/>
</dbReference>
<dbReference type="GO" id="GO:0004068">
    <property type="term" value="F:aspartate 1-decarboxylase activity"/>
    <property type="evidence" value="ECO:0007669"/>
    <property type="project" value="UniProtKB-UniRule"/>
</dbReference>
<dbReference type="GO" id="GO:0006523">
    <property type="term" value="P:alanine biosynthetic process"/>
    <property type="evidence" value="ECO:0007669"/>
    <property type="project" value="InterPro"/>
</dbReference>
<dbReference type="GO" id="GO:0015940">
    <property type="term" value="P:pantothenate biosynthetic process"/>
    <property type="evidence" value="ECO:0007669"/>
    <property type="project" value="UniProtKB-UniRule"/>
</dbReference>
<dbReference type="CDD" id="cd06919">
    <property type="entry name" value="Asp_decarbox"/>
    <property type="match status" value="1"/>
</dbReference>
<dbReference type="Gene3D" id="2.40.40.20">
    <property type="match status" value="1"/>
</dbReference>
<dbReference type="HAMAP" id="MF_00446">
    <property type="entry name" value="PanD"/>
    <property type="match status" value="1"/>
</dbReference>
<dbReference type="InterPro" id="IPR009010">
    <property type="entry name" value="Asp_de-COase-like_dom_sf"/>
</dbReference>
<dbReference type="InterPro" id="IPR003190">
    <property type="entry name" value="Asp_decarbox"/>
</dbReference>
<dbReference type="NCBIfam" id="TIGR00223">
    <property type="entry name" value="panD"/>
    <property type="match status" value="1"/>
</dbReference>
<dbReference type="PANTHER" id="PTHR21012">
    <property type="entry name" value="ASPARTATE 1-DECARBOXYLASE"/>
    <property type="match status" value="1"/>
</dbReference>
<dbReference type="PANTHER" id="PTHR21012:SF0">
    <property type="entry name" value="ASPARTATE 1-DECARBOXYLASE"/>
    <property type="match status" value="1"/>
</dbReference>
<dbReference type="Pfam" id="PF02261">
    <property type="entry name" value="Asp_decarbox"/>
    <property type="match status" value="1"/>
</dbReference>
<dbReference type="PIRSF" id="PIRSF006246">
    <property type="entry name" value="Asp_decarbox"/>
    <property type="match status" value="1"/>
</dbReference>
<dbReference type="SUPFAM" id="SSF50692">
    <property type="entry name" value="ADC-like"/>
    <property type="match status" value="1"/>
</dbReference>
<proteinExistence type="inferred from homology"/>